<gene>
    <name type="primary">IAPP</name>
</gene>
<name>IAPP_SHEEP</name>
<comment type="function">
    <text evidence="2 3">Amylin/IAPP is a glucoregulatory peptide hormone that plays an important role in the regulation of energy homeostasis (By similarity). Selectively inhibits insulin-stimulated glucose utilization and glycogen deposition in muscle, while not affecting adipocyte glucose metabolism. IAPP function is mediated by the CALCR-RAMPs (AMYRs) receptor complexes. Amylin can also bind CALCR receptor in the absence of RAMPs, although it is more selective for AMYRs (By similarity).</text>
</comment>
<comment type="subunit">
    <text evidence="2 3">Can form homodimers. Interacts with IDE and INS. Interaction with INS inhibits homodimerization and fibril formation (By similarity).</text>
</comment>
<comment type="subcellular location">
    <subcellularLocation>
        <location evidence="2">Secreted</location>
    </subcellularLocation>
</comment>
<comment type="domain">
    <text evidence="1">The mature protein is largely unstructured in the absence of a cognate ligand.</text>
</comment>
<comment type="similarity">
    <text evidence="4">Belongs to the calcitonin family.</text>
</comment>
<dbReference type="EMBL" id="U62629">
    <property type="protein sequence ID" value="AAB05916.1"/>
    <property type="molecule type" value="Genomic_DNA"/>
</dbReference>
<dbReference type="SMR" id="Q28605"/>
<dbReference type="STRING" id="9940.ENSOARP00000021874"/>
<dbReference type="Proteomes" id="UP000002356">
    <property type="component" value="Unplaced"/>
</dbReference>
<dbReference type="GO" id="GO:0005576">
    <property type="term" value="C:extracellular region"/>
    <property type="evidence" value="ECO:0007669"/>
    <property type="project" value="UniProtKB-SubCell"/>
</dbReference>
<dbReference type="GO" id="GO:0005179">
    <property type="term" value="F:hormone activity"/>
    <property type="evidence" value="ECO:0000250"/>
    <property type="project" value="UniProtKB"/>
</dbReference>
<dbReference type="GO" id="GO:0048018">
    <property type="term" value="F:receptor ligand activity"/>
    <property type="evidence" value="ECO:0000250"/>
    <property type="project" value="UniProtKB"/>
</dbReference>
<dbReference type="GO" id="GO:0097647">
    <property type="term" value="P:amylin receptor signaling pathway"/>
    <property type="evidence" value="ECO:0000250"/>
    <property type="project" value="UniProtKB"/>
</dbReference>
<dbReference type="Gene3D" id="6.10.250.2190">
    <property type="match status" value="1"/>
</dbReference>
<dbReference type="InterPro" id="IPR021116">
    <property type="entry name" value="Calcitonin/adrenomedullin"/>
</dbReference>
<dbReference type="InterPro" id="IPR000443">
    <property type="entry name" value="IAPP"/>
</dbReference>
<dbReference type="Pfam" id="PF00214">
    <property type="entry name" value="Calc_CGRP_IAPP"/>
    <property type="match status" value="1"/>
</dbReference>
<dbReference type="PRINTS" id="PR00818">
    <property type="entry name" value="ISLETAMYLOID"/>
</dbReference>
<feature type="peptide" id="PRO_0000004125" description="Islet amyloid polypeptide">
    <location>
        <begin position="1" status="less than"/>
        <end position="32" status="greater than"/>
    </location>
</feature>
<feature type="non-terminal residue">
    <location>
        <position position="1"/>
    </location>
</feature>
<feature type="non-terminal residue">
    <location>
        <position position="32"/>
    </location>
</feature>
<keyword id="KW-0034">Amyloid</keyword>
<keyword id="KW-0372">Hormone</keyword>
<keyword id="KW-1185">Reference proteome</keyword>
<keyword id="KW-0964">Secreted</keyword>
<protein>
    <recommendedName>
        <fullName>Islet amyloid polypeptide</fullName>
        <shortName>IAPP</shortName>
    </recommendedName>
    <alternativeName>
        <fullName>Amylin</fullName>
    </alternativeName>
</protein>
<accession>Q28605</accession>
<sequence length="32" mass="3300">GTATCETQRLANFLAPSSNKLGAIFSPTKMGS</sequence>
<organism>
    <name type="scientific">Ovis aries</name>
    <name type="common">Sheep</name>
    <dbReference type="NCBI Taxonomy" id="9940"/>
    <lineage>
        <taxon>Eukaryota</taxon>
        <taxon>Metazoa</taxon>
        <taxon>Chordata</taxon>
        <taxon>Craniata</taxon>
        <taxon>Vertebrata</taxon>
        <taxon>Euteleostomi</taxon>
        <taxon>Mammalia</taxon>
        <taxon>Eutheria</taxon>
        <taxon>Laurasiatheria</taxon>
        <taxon>Artiodactyla</taxon>
        <taxon>Ruminantia</taxon>
        <taxon>Pecora</taxon>
        <taxon>Bovidae</taxon>
        <taxon>Caprinae</taxon>
        <taxon>Ovis</taxon>
    </lineage>
</organism>
<reference key="1">
    <citation type="submission" date="1996-08" db="EMBL/GenBank/DDBJ databases">
        <title>PCR amplification of amylin 3-34 from genomic DNA.</title>
        <authorList>
            <person name="Albrandt K."/>
            <person name="Sierzega M.E."/>
            <person name="Mull E."/>
            <person name="Brady E.M.G."/>
        </authorList>
    </citation>
    <scope>NUCLEOTIDE SEQUENCE [GENOMIC DNA]</scope>
</reference>
<evidence type="ECO:0000250" key="1"/>
<evidence type="ECO:0000250" key="2">
    <source>
        <dbReference type="UniProtKB" id="P10997"/>
    </source>
</evidence>
<evidence type="ECO:0000250" key="3">
    <source>
        <dbReference type="UniProtKB" id="P12969"/>
    </source>
</evidence>
<evidence type="ECO:0000305" key="4"/>
<proteinExistence type="inferred from homology"/>